<feature type="chain" id="PRO_0000372848" description="CXXC-type zinc finger protein 1">
    <location>
        <begin position="1"/>
        <end position="663"/>
    </location>
</feature>
<feature type="zinc finger region" description="PHD-type" evidence="1">
    <location>
        <begin position="60"/>
        <end position="110"/>
    </location>
</feature>
<feature type="zinc finger region" description="CXXC-type" evidence="2">
    <location>
        <begin position="175"/>
        <end position="219"/>
    </location>
</feature>
<feature type="region of interest" description="Disordered" evidence="3">
    <location>
        <begin position="134"/>
        <end position="183"/>
    </location>
</feature>
<feature type="region of interest" description="Disordered" evidence="3">
    <location>
        <begin position="230"/>
        <end position="254"/>
    </location>
</feature>
<feature type="compositionally biased region" description="Low complexity" evidence="3">
    <location>
        <begin position="134"/>
        <end position="161"/>
    </location>
</feature>
<feature type="binding site" evidence="2">
    <location>
        <position position="186"/>
    </location>
    <ligand>
        <name>Zn(2+)</name>
        <dbReference type="ChEBI" id="CHEBI:29105"/>
        <label>1</label>
    </ligand>
</feature>
<feature type="binding site" evidence="2">
    <location>
        <position position="189"/>
    </location>
    <ligand>
        <name>Zn(2+)</name>
        <dbReference type="ChEBI" id="CHEBI:29105"/>
        <label>1</label>
    </ligand>
</feature>
<feature type="binding site" evidence="2">
    <location>
        <position position="192"/>
    </location>
    <ligand>
        <name>Zn(2+)</name>
        <dbReference type="ChEBI" id="CHEBI:29105"/>
        <label>1</label>
    </ligand>
</feature>
<feature type="binding site" evidence="2">
    <location>
        <position position="197"/>
    </location>
    <ligand>
        <name>Zn(2+)</name>
        <dbReference type="ChEBI" id="CHEBI:29105"/>
        <label>2</label>
    </ligand>
</feature>
<feature type="binding site" evidence="2">
    <location>
        <position position="200"/>
    </location>
    <ligand>
        <name>Zn(2+)</name>
        <dbReference type="ChEBI" id="CHEBI:29105"/>
        <label>2</label>
    </ligand>
</feature>
<feature type="binding site" evidence="2">
    <location>
        <position position="203"/>
    </location>
    <ligand>
        <name>Zn(2+)</name>
        <dbReference type="ChEBI" id="CHEBI:29105"/>
        <label>2</label>
    </ligand>
</feature>
<feature type="binding site" evidence="2">
    <location>
        <position position="213"/>
    </location>
    <ligand>
        <name>Zn(2+)</name>
        <dbReference type="ChEBI" id="CHEBI:29105"/>
        <label>2</label>
    </ligand>
</feature>
<feature type="binding site" evidence="2">
    <location>
        <position position="218"/>
    </location>
    <ligand>
        <name>Zn(2+)</name>
        <dbReference type="ChEBI" id="CHEBI:29105"/>
        <label>1</label>
    </ligand>
</feature>
<feature type="modified residue" description="Phosphoserine" evidence="4">
    <location>
        <position position="258"/>
    </location>
</feature>
<feature type="helix" evidence="7">
    <location>
        <begin position="61"/>
        <end position="63"/>
    </location>
</feature>
<feature type="strand" evidence="7">
    <location>
        <begin position="74"/>
        <end position="77"/>
    </location>
</feature>
<feature type="turn" evidence="7">
    <location>
        <begin position="78"/>
        <end position="80"/>
    </location>
</feature>
<feature type="strand" evidence="7">
    <location>
        <begin position="83"/>
        <end position="85"/>
    </location>
</feature>
<feature type="turn" evidence="7">
    <location>
        <begin position="86"/>
        <end position="90"/>
    </location>
</feature>
<feature type="helix" evidence="7">
    <location>
        <begin position="93"/>
        <end position="96"/>
    </location>
</feature>
<feature type="strand" evidence="7">
    <location>
        <begin position="99"/>
        <end position="102"/>
    </location>
</feature>
<feature type="helix" evidence="7">
    <location>
        <begin position="105"/>
        <end position="110"/>
    </location>
</feature>
<sequence length="663" mass="76696">MTDKRKYKKTVSFTRCTAIIFLTTKEVSKQKEEIRREIAREFDLPERKSKIATILKQEDQAYCICRSSDCSRFMIGCDGCEEWYHGDCIGITEKEAKHIKQYYCRRCKKENPELQTIFRLVATERAAASNAASTSLNAPGVGPSGAAPAAAPVASATTSQQAPPPTTAAAKRKNSSAREPKMGKRCGTCEGCRRPNCNQCDACRVRVGHKPRCIFRTCVVQAATVLKESQATQAGPSRKREKAAPKSRNVQVGPRAASPEIFLNPELQGIRQCYGPNCCSHARPQSKYCSDKCGFNLATKRIFQVLPQRLQEWNLTPSRAAEETRKHLDNIRHKQSLVRFALAELEKRSEELNMVVERAKRSSIDTLGSQDTADMEDEQSMYCITCGHEIHSRTAIKHMEKCFNKYESQASFGSIFKTRMEGNNMFCDFYNPASKTYCKRLRVLCPEHSKDPKVNDTDVCGSPLVNNVFNPTGEFCRAPKKNCFKHYAWEKIRRAEIDLERVRQWLKMDDLMEQERVMRQQLTSRANLLGLMLHSTYNHEVMDELVRKQQEHLVEFEKQRRRLAHQQQIQTQQKQYQEKQKLMLQQQQQQQQQQQQQQQQQQQQQLQQPQQQQQQQQQQQQEQQQLQLKPHHLQQLQLQLLQQQQKKAQIPQKTQIIYLQKKT</sequence>
<reference key="1">
    <citation type="journal article" date="2000" name="Science">
        <title>The genome sequence of Drosophila melanogaster.</title>
        <authorList>
            <person name="Adams M.D."/>
            <person name="Celniker S.E."/>
            <person name="Holt R.A."/>
            <person name="Evans C.A."/>
            <person name="Gocayne J.D."/>
            <person name="Amanatides P.G."/>
            <person name="Scherer S.E."/>
            <person name="Li P.W."/>
            <person name="Hoskins R.A."/>
            <person name="Galle R.F."/>
            <person name="George R.A."/>
            <person name="Lewis S.E."/>
            <person name="Richards S."/>
            <person name="Ashburner M."/>
            <person name="Henderson S.N."/>
            <person name="Sutton G.G."/>
            <person name="Wortman J.R."/>
            <person name="Yandell M.D."/>
            <person name="Zhang Q."/>
            <person name="Chen L.X."/>
            <person name="Brandon R.C."/>
            <person name="Rogers Y.-H.C."/>
            <person name="Blazej R.G."/>
            <person name="Champe M."/>
            <person name="Pfeiffer B.D."/>
            <person name="Wan K.H."/>
            <person name="Doyle C."/>
            <person name="Baxter E.G."/>
            <person name="Helt G."/>
            <person name="Nelson C.R."/>
            <person name="Miklos G.L.G."/>
            <person name="Abril J.F."/>
            <person name="Agbayani A."/>
            <person name="An H.-J."/>
            <person name="Andrews-Pfannkoch C."/>
            <person name="Baldwin D."/>
            <person name="Ballew R.M."/>
            <person name="Basu A."/>
            <person name="Baxendale J."/>
            <person name="Bayraktaroglu L."/>
            <person name="Beasley E.M."/>
            <person name="Beeson K.Y."/>
            <person name="Benos P.V."/>
            <person name="Berman B.P."/>
            <person name="Bhandari D."/>
            <person name="Bolshakov S."/>
            <person name="Borkova D."/>
            <person name="Botchan M.R."/>
            <person name="Bouck J."/>
            <person name="Brokstein P."/>
            <person name="Brottier P."/>
            <person name="Burtis K.C."/>
            <person name="Busam D.A."/>
            <person name="Butler H."/>
            <person name="Cadieu E."/>
            <person name="Center A."/>
            <person name="Chandra I."/>
            <person name="Cherry J.M."/>
            <person name="Cawley S."/>
            <person name="Dahlke C."/>
            <person name="Davenport L.B."/>
            <person name="Davies P."/>
            <person name="de Pablos B."/>
            <person name="Delcher A."/>
            <person name="Deng Z."/>
            <person name="Mays A.D."/>
            <person name="Dew I."/>
            <person name="Dietz S.M."/>
            <person name="Dodson K."/>
            <person name="Doup L.E."/>
            <person name="Downes M."/>
            <person name="Dugan-Rocha S."/>
            <person name="Dunkov B.C."/>
            <person name="Dunn P."/>
            <person name="Durbin K.J."/>
            <person name="Evangelista C.C."/>
            <person name="Ferraz C."/>
            <person name="Ferriera S."/>
            <person name="Fleischmann W."/>
            <person name="Fosler C."/>
            <person name="Gabrielian A.E."/>
            <person name="Garg N.S."/>
            <person name="Gelbart W.M."/>
            <person name="Glasser K."/>
            <person name="Glodek A."/>
            <person name="Gong F."/>
            <person name="Gorrell J.H."/>
            <person name="Gu Z."/>
            <person name="Guan P."/>
            <person name="Harris M."/>
            <person name="Harris N.L."/>
            <person name="Harvey D.A."/>
            <person name="Heiman T.J."/>
            <person name="Hernandez J.R."/>
            <person name="Houck J."/>
            <person name="Hostin D."/>
            <person name="Houston K.A."/>
            <person name="Howland T.J."/>
            <person name="Wei M.-H."/>
            <person name="Ibegwam C."/>
            <person name="Jalali M."/>
            <person name="Kalush F."/>
            <person name="Karpen G.H."/>
            <person name="Ke Z."/>
            <person name="Kennison J.A."/>
            <person name="Ketchum K.A."/>
            <person name="Kimmel B.E."/>
            <person name="Kodira C.D."/>
            <person name="Kraft C.L."/>
            <person name="Kravitz S."/>
            <person name="Kulp D."/>
            <person name="Lai Z."/>
            <person name="Lasko P."/>
            <person name="Lei Y."/>
            <person name="Levitsky A.A."/>
            <person name="Li J.H."/>
            <person name="Li Z."/>
            <person name="Liang Y."/>
            <person name="Lin X."/>
            <person name="Liu X."/>
            <person name="Mattei B."/>
            <person name="McIntosh T.C."/>
            <person name="McLeod M.P."/>
            <person name="McPherson D."/>
            <person name="Merkulov G."/>
            <person name="Milshina N.V."/>
            <person name="Mobarry C."/>
            <person name="Morris J."/>
            <person name="Moshrefi A."/>
            <person name="Mount S.M."/>
            <person name="Moy M."/>
            <person name="Murphy B."/>
            <person name="Murphy L."/>
            <person name="Muzny D.M."/>
            <person name="Nelson D.L."/>
            <person name="Nelson D.R."/>
            <person name="Nelson K.A."/>
            <person name="Nixon K."/>
            <person name="Nusskern D.R."/>
            <person name="Pacleb J.M."/>
            <person name="Palazzolo M."/>
            <person name="Pittman G.S."/>
            <person name="Pan S."/>
            <person name="Pollard J."/>
            <person name="Puri V."/>
            <person name="Reese M.G."/>
            <person name="Reinert K."/>
            <person name="Remington K."/>
            <person name="Saunders R.D.C."/>
            <person name="Scheeler F."/>
            <person name="Shen H."/>
            <person name="Shue B.C."/>
            <person name="Siden-Kiamos I."/>
            <person name="Simpson M."/>
            <person name="Skupski M.P."/>
            <person name="Smith T.J."/>
            <person name="Spier E."/>
            <person name="Spradling A.C."/>
            <person name="Stapleton M."/>
            <person name="Strong R."/>
            <person name="Sun E."/>
            <person name="Svirskas R."/>
            <person name="Tector C."/>
            <person name="Turner R."/>
            <person name="Venter E."/>
            <person name="Wang A.H."/>
            <person name="Wang X."/>
            <person name="Wang Z.-Y."/>
            <person name="Wassarman D.A."/>
            <person name="Weinstock G.M."/>
            <person name="Weissenbach J."/>
            <person name="Williams S.M."/>
            <person name="Woodage T."/>
            <person name="Worley K.C."/>
            <person name="Wu D."/>
            <person name="Yang S."/>
            <person name="Yao Q.A."/>
            <person name="Ye J."/>
            <person name="Yeh R.-F."/>
            <person name="Zaveri J.S."/>
            <person name="Zhan M."/>
            <person name="Zhang G."/>
            <person name="Zhao Q."/>
            <person name="Zheng L."/>
            <person name="Zheng X.H."/>
            <person name="Zhong F.N."/>
            <person name="Zhong W."/>
            <person name="Zhou X."/>
            <person name="Zhu S.C."/>
            <person name="Zhu X."/>
            <person name="Smith H.O."/>
            <person name="Gibbs R.A."/>
            <person name="Myers E.W."/>
            <person name="Rubin G.M."/>
            <person name="Venter J.C."/>
        </authorList>
    </citation>
    <scope>NUCLEOTIDE SEQUENCE [LARGE SCALE GENOMIC DNA]</scope>
    <source>
        <strain>Berkeley</strain>
    </source>
</reference>
<reference key="2">
    <citation type="journal article" date="2002" name="Genome Biol.">
        <title>Annotation of the Drosophila melanogaster euchromatic genome: a systematic review.</title>
        <authorList>
            <person name="Misra S."/>
            <person name="Crosby M.A."/>
            <person name="Mungall C.J."/>
            <person name="Matthews B.B."/>
            <person name="Campbell K.S."/>
            <person name="Hradecky P."/>
            <person name="Huang Y."/>
            <person name="Kaminker J.S."/>
            <person name="Millburn G.H."/>
            <person name="Prochnik S.E."/>
            <person name="Smith C.D."/>
            <person name="Tupy J.L."/>
            <person name="Whitfield E.J."/>
            <person name="Bayraktaroglu L."/>
            <person name="Berman B.P."/>
            <person name="Bettencourt B.R."/>
            <person name="Celniker S.E."/>
            <person name="de Grey A.D.N.J."/>
            <person name="Drysdale R.A."/>
            <person name="Harris N.L."/>
            <person name="Richter J."/>
            <person name="Russo S."/>
            <person name="Schroeder A.J."/>
            <person name="Shu S.Q."/>
            <person name="Stapleton M."/>
            <person name="Yamada C."/>
            <person name="Ashburner M."/>
            <person name="Gelbart W.M."/>
            <person name="Rubin G.M."/>
            <person name="Lewis S.E."/>
        </authorList>
    </citation>
    <scope>GENOME REANNOTATION</scope>
    <source>
        <strain>Berkeley</strain>
    </source>
</reference>
<reference key="3">
    <citation type="journal article" date="2007" name="Mol. Biosyst.">
        <title>An integrated chemical, mass spectrometric and computational strategy for (quantitative) phosphoproteomics: application to Drosophila melanogaster Kc167 cells.</title>
        <authorList>
            <person name="Bodenmiller B."/>
            <person name="Mueller L.N."/>
            <person name="Pedrioli P.G.A."/>
            <person name="Pflieger D."/>
            <person name="Juenger M.A."/>
            <person name="Eng J.K."/>
            <person name="Aebersold R."/>
            <person name="Tao W.A."/>
        </authorList>
    </citation>
    <scope>PHOSPHORYLATION [LARGE SCALE ANALYSIS] AT SER-258</scope>
    <scope>IDENTIFICATION BY MASS SPECTROMETRY</scope>
</reference>
<reference key="4">
    <citation type="journal article" date="2011" name="EMBO J.">
        <title>Drosophila Set1 is the major histone H3 lysine 4 trimethyltransferase with role in transcription.</title>
        <authorList>
            <person name="Ardehali M.B."/>
            <person name="Mei A."/>
            <person name="Zobeck K.L."/>
            <person name="Caron M."/>
            <person name="Lis J.T."/>
            <person name="Kusch T."/>
        </authorList>
    </citation>
    <scope>FUNCTION</scope>
    <scope>IDENTIFICATION IN THE SET1 COMPLEX</scope>
    <scope>SUBCELLULAR LOCATION</scope>
</reference>
<reference key="5">
    <citation type="journal article" date="2011" name="Mol. Cell. Biol.">
        <title>The COMPASS family of H3K4 methylases in Drosophila.</title>
        <authorList>
            <person name="Mohan M."/>
            <person name="Herz H.M."/>
            <person name="Smith E.R."/>
            <person name="Zhang Y."/>
            <person name="Jackson J."/>
            <person name="Washburn M.P."/>
            <person name="Florens L."/>
            <person name="Eissenberg J.C."/>
            <person name="Shilatifard A."/>
        </authorList>
    </citation>
    <scope>IDENTIFICATION IN THE SET1 COMPLEX</scope>
</reference>
<name>CXXC1_DROME</name>
<accession>Q9W352</accession>
<comment type="function">
    <text evidence="5">Component of the SET1 complex that specifically di- and trimethylates 'Lys-4' of histone H3. Essential for Set1 association with chromatin and trimethylation of histone H3 at 'Lys-4' at transcription puffs. Additionally, is critical for general chromosomal association of Set1.</text>
</comment>
<comment type="subunit">
    <text evidence="5 6">Component of the SET1 complex, composed at least of the catalytic subunit Set1, wds/WDR5, Wdr82, Rbbp5, ash2, Cfp1/CXXC1, hcf and Dpy-30L1.</text>
</comment>
<comment type="subcellular location">
    <subcellularLocation>
        <location evidence="5">Nucleus</location>
    </subcellularLocation>
</comment>
<dbReference type="EMBL" id="AE014298">
    <property type="protein sequence ID" value="AAF46483.1"/>
    <property type="molecule type" value="Genomic_DNA"/>
</dbReference>
<dbReference type="RefSeq" id="NP_572556.1">
    <property type="nucleotide sequence ID" value="NM_132328.3"/>
</dbReference>
<dbReference type="PDB" id="9C0O">
    <property type="method" value="X-ray"/>
    <property type="resolution" value="1.53 A"/>
    <property type="chains" value="A=56-119"/>
</dbReference>
<dbReference type="PDBsum" id="9C0O"/>
<dbReference type="SMR" id="Q9W352"/>
<dbReference type="BioGRID" id="58329">
    <property type="interactions" value="17"/>
</dbReference>
<dbReference type="ComplexPortal" id="CPX-2798">
    <property type="entry name" value="COMPASS complex"/>
</dbReference>
<dbReference type="FunCoup" id="Q9W352">
    <property type="interactions" value="1071"/>
</dbReference>
<dbReference type="IntAct" id="Q9W352">
    <property type="interactions" value="9"/>
</dbReference>
<dbReference type="MINT" id="Q9W352"/>
<dbReference type="STRING" id="7227.FBpp0071262"/>
<dbReference type="GlyGen" id="Q9W352">
    <property type="glycosylation" value="1 site"/>
</dbReference>
<dbReference type="iPTMnet" id="Q9W352"/>
<dbReference type="PaxDb" id="7227-FBpp0071262"/>
<dbReference type="EnsemblMetazoa" id="FBtr0071327">
    <property type="protein sequence ID" value="FBpp0071262"/>
    <property type="gene ID" value="FBgn0030121"/>
</dbReference>
<dbReference type="GeneID" id="31880"/>
<dbReference type="KEGG" id="dme:Dmel_CG17446"/>
<dbReference type="UCSC" id="CG17446-RA">
    <property type="organism name" value="d. melanogaster"/>
</dbReference>
<dbReference type="AGR" id="FB:FBgn0030121"/>
<dbReference type="CTD" id="104320"/>
<dbReference type="FlyBase" id="FBgn0030121">
    <property type="gene designation" value="Cfp1"/>
</dbReference>
<dbReference type="VEuPathDB" id="VectorBase:FBgn0030121"/>
<dbReference type="eggNOG" id="KOG1632">
    <property type="taxonomic scope" value="Eukaryota"/>
</dbReference>
<dbReference type="GeneTree" id="ENSGT00940000169358"/>
<dbReference type="InParanoid" id="Q9W352"/>
<dbReference type="OMA" id="IRVGHKP"/>
<dbReference type="OrthoDB" id="419183at2759"/>
<dbReference type="PhylomeDB" id="Q9W352"/>
<dbReference type="Reactome" id="R-DME-9772755">
    <property type="pathway name" value="Formation of WDR5-containing histone-modifying complexes"/>
</dbReference>
<dbReference type="SignaLink" id="Q9W352"/>
<dbReference type="BioGRID-ORCS" id="31880">
    <property type="hits" value="0 hits in 1 CRISPR screen"/>
</dbReference>
<dbReference type="GenomeRNAi" id="31880"/>
<dbReference type="PRO" id="PR:Q9W352"/>
<dbReference type="Proteomes" id="UP000000803">
    <property type="component" value="Chromosome X"/>
</dbReference>
<dbReference type="Bgee" id="FBgn0030121">
    <property type="expression patterns" value="Expressed in egg cell and 55 other cell types or tissues"/>
</dbReference>
<dbReference type="ExpressionAtlas" id="Q9W352">
    <property type="expression patterns" value="baseline and differential"/>
</dbReference>
<dbReference type="GO" id="GO:0048188">
    <property type="term" value="C:Set1C/COMPASS complex"/>
    <property type="evidence" value="ECO:0000314"/>
    <property type="project" value="FlyBase"/>
</dbReference>
<dbReference type="GO" id="GO:0003677">
    <property type="term" value="F:DNA binding"/>
    <property type="evidence" value="ECO:0007669"/>
    <property type="project" value="UniProtKB-KW"/>
</dbReference>
<dbReference type="GO" id="GO:0035064">
    <property type="term" value="F:methylated histone binding"/>
    <property type="evidence" value="ECO:0000318"/>
    <property type="project" value="GO_Central"/>
</dbReference>
<dbReference type="GO" id="GO:0008270">
    <property type="term" value="F:zinc ion binding"/>
    <property type="evidence" value="ECO:0007669"/>
    <property type="project" value="UniProtKB-KW"/>
</dbReference>
<dbReference type="GO" id="GO:0045893">
    <property type="term" value="P:positive regulation of DNA-templated transcription"/>
    <property type="evidence" value="ECO:0000318"/>
    <property type="project" value="GO_Central"/>
</dbReference>
<dbReference type="CDD" id="cd15553">
    <property type="entry name" value="PHD_Cfp1"/>
    <property type="match status" value="1"/>
</dbReference>
<dbReference type="FunFam" id="3.30.40.10:FF:000138">
    <property type="entry name" value="CXXC-type zinc finger protein 1"/>
    <property type="match status" value="1"/>
</dbReference>
<dbReference type="Gene3D" id="3.30.40.10">
    <property type="entry name" value="Zinc/RING finger domain, C3HC4 (zinc finger)"/>
    <property type="match status" value="1"/>
</dbReference>
<dbReference type="InterPro" id="IPR022056">
    <property type="entry name" value="CpG-bd_C"/>
</dbReference>
<dbReference type="InterPro" id="IPR037869">
    <property type="entry name" value="Spp1/CFP1"/>
</dbReference>
<dbReference type="InterPro" id="IPR019786">
    <property type="entry name" value="Zinc_finger_PHD-type_CS"/>
</dbReference>
<dbReference type="InterPro" id="IPR002857">
    <property type="entry name" value="Znf_CXXC"/>
</dbReference>
<dbReference type="InterPro" id="IPR011011">
    <property type="entry name" value="Znf_FYVE_PHD"/>
</dbReference>
<dbReference type="InterPro" id="IPR001965">
    <property type="entry name" value="Znf_PHD"/>
</dbReference>
<dbReference type="InterPro" id="IPR019787">
    <property type="entry name" value="Znf_PHD-finger"/>
</dbReference>
<dbReference type="InterPro" id="IPR013083">
    <property type="entry name" value="Znf_RING/FYVE/PHD"/>
</dbReference>
<dbReference type="PANTHER" id="PTHR46174">
    <property type="entry name" value="CXXC-TYPE ZINC FINGER PROTEIN 1"/>
    <property type="match status" value="1"/>
</dbReference>
<dbReference type="PANTHER" id="PTHR46174:SF1">
    <property type="entry name" value="CXXC-TYPE ZINC FINGER PROTEIN 1"/>
    <property type="match status" value="1"/>
</dbReference>
<dbReference type="Pfam" id="PF12269">
    <property type="entry name" value="CpG_bind_C"/>
    <property type="match status" value="1"/>
</dbReference>
<dbReference type="Pfam" id="PF00628">
    <property type="entry name" value="PHD"/>
    <property type="match status" value="1"/>
</dbReference>
<dbReference type="SMART" id="SM00249">
    <property type="entry name" value="PHD"/>
    <property type="match status" value="1"/>
</dbReference>
<dbReference type="SUPFAM" id="SSF57903">
    <property type="entry name" value="FYVE/PHD zinc finger"/>
    <property type="match status" value="1"/>
</dbReference>
<dbReference type="PROSITE" id="PS51058">
    <property type="entry name" value="ZF_CXXC"/>
    <property type="match status" value="1"/>
</dbReference>
<dbReference type="PROSITE" id="PS01359">
    <property type="entry name" value="ZF_PHD_1"/>
    <property type="match status" value="1"/>
</dbReference>
<dbReference type="PROSITE" id="PS50016">
    <property type="entry name" value="ZF_PHD_2"/>
    <property type="match status" value="1"/>
</dbReference>
<evidence type="ECO:0000255" key="1">
    <source>
        <dbReference type="PROSITE-ProRule" id="PRU00146"/>
    </source>
</evidence>
<evidence type="ECO:0000255" key="2">
    <source>
        <dbReference type="PROSITE-ProRule" id="PRU00509"/>
    </source>
</evidence>
<evidence type="ECO:0000256" key="3">
    <source>
        <dbReference type="SAM" id="MobiDB-lite"/>
    </source>
</evidence>
<evidence type="ECO:0000269" key="4">
    <source>
    </source>
</evidence>
<evidence type="ECO:0000269" key="5">
    <source>
    </source>
</evidence>
<evidence type="ECO:0000269" key="6">
    <source>
    </source>
</evidence>
<evidence type="ECO:0007829" key="7">
    <source>
        <dbReference type="PDB" id="9C0O"/>
    </source>
</evidence>
<gene>
    <name type="primary">Cfp1</name>
    <name type="ORF">CG17446</name>
</gene>
<organism>
    <name type="scientific">Drosophila melanogaster</name>
    <name type="common">Fruit fly</name>
    <dbReference type="NCBI Taxonomy" id="7227"/>
    <lineage>
        <taxon>Eukaryota</taxon>
        <taxon>Metazoa</taxon>
        <taxon>Ecdysozoa</taxon>
        <taxon>Arthropoda</taxon>
        <taxon>Hexapoda</taxon>
        <taxon>Insecta</taxon>
        <taxon>Pterygota</taxon>
        <taxon>Neoptera</taxon>
        <taxon>Endopterygota</taxon>
        <taxon>Diptera</taxon>
        <taxon>Brachycera</taxon>
        <taxon>Muscomorpha</taxon>
        <taxon>Ephydroidea</taxon>
        <taxon>Drosophilidae</taxon>
        <taxon>Drosophila</taxon>
        <taxon>Sophophora</taxon>
    </lineage>
</organism>
<protein>
    <recommendedName>
        <fullName>CXXC-type zinc finger protein 1</fullName>
    </recommendedName>
    <alternativeName>
        <fullName>PHD finger and CXXC domain-containing protein 1</fullName>
    </alternativeName>
</protein>
<keyword id="KW-0002">3D-structure</keyword>
<keyword id="KW-0238">DNA-binding</keyword>
<keyword id="KW-0479">Metal-binding</keyword>
<keyword id="KW-0539">Nucleus</keyword>
<keyword id="KW-0597">Phosphoprotein</keyword>
<keyword id="KW-1185">Reference proteome</keyword>
<keyword id="KW-0804">Transcription</keyword>
<keyword id="KW-0805">Transcription regulation</keyword>
<keyword id="KW-0862">Zinc</keyword>
<keyword id="KW-0863">Zinc-finger</keyword>
<proteinExistence type="evidence at protein level"/>